<organism>
    <name type="scientific">Escherichia coli O157:H7</name>
    <dbReference type="NCBI Taxonomy" id="83334"/>
    <lineage>
        <taxon>Bacteria</taxon>
        <taxon>Pseudomonadati</taxon>
        <taxon>Pseudomonadota</taxon>
        <taxon>Gammaproteobacteria</taxon>
        <taxon>Enterobacterales</taxon>
        <taxon>Enterobacteriaceae</taxon>
        <taxon>Escherichia</taxon>
    </lineage>
</organism>
<accession>P0ACQ6</accession>
<accession>P11721</accession>
<accession>P22471</accession>
<evidence type="ECO:0000250" key="1"/>
<evidence type="ECO:0000255" key="2">
    <source>
        <dbReference type="PROSITE-ProRule" id="PRU00253"/>
    </source>
</evidence>
<evidence type="ECO:0000305" key="3"/>
<feature type="chain" id="PRO_0000105729" description="Hydrogen peroxide-inducible genes activator">
    <location>
        <begin position="1"/>
        <end position="305"/>
    </location>
</feature>
<feature type="domain" description="HTH lysR-type" evidence="2">
    <location>
        <begin position="1"/>
        <end position="58"/>
    </location>
</feature>
<feature type="DNA-binding region" description="H-T-H motif" evidence="2">
    <location>
        <begin position="18"/>
        <end position="37"/>
    </location>
</feature>
<feature type="modified residue" description="Cysteine sulfenic acid (-SOH); alternate" evidence="1">
    <location>
        <position position="199"/>
    </location>
</feature>
<feature type="modified residue" description="S-glutathionyl cysteine; alternate" evidence="1">
    <location>
        <position position="199"/>
    </location>
</feature>
<feature type="modified residue" description="S-nitrosocysteine; alternate" evidence="1">
    <location>
        <position position="199"/>
    </location>
</feature>
<feature type="disulfide bond" evidence="1">
    <location>
        <begin position="180"/>
        <end position="259"/>
    </location>
</feature>
<feature type="disulfide bond" description="Alternate" evidence="1">
    <location>
        <begin position="199"/>
        <end position="208"/>
    </location>
</feature>
<gene>
    <name type="primary">oxyR</name>
    <name type="ordered locus">Z5519</name>
    <name type="ordered locus">ECs4890</name>
</gene>
<reference key="1">
    <citation type="journal article" date="2001" name="Nature">
        <title>Genome sequence of enterohaemorrhagic Escherichia coli O157:H7.</title>
        <authorList>
            <person name="Perna N.T."/>
            <person name="Plunkett G. III"/>
            <person name="Burland V."/>
            <person name="Mau B."/>
            <person name="Glasner J.D."/>
            <person name="Rose D.J."/>
            <person name="Mayhew G.F."/>
            <person name="Evans P.S."/>
            <person name="Gregor J."/>
            <person name="Kirkpatrick H.A."/>
            <person name="Posfai G."/>
            <person name="Hackett J."/>
            <person name="Klink S."/>
            <person name="Boutin A."/>
            <person name="Shao Y."/>
            <person name="Miller L."/>
            <person name="Grotbeck E.J."/>
            <person name="Davis N.W."/>
            <person name="Lim A."/>
            <person name="Dimalanta E.T."/>
            <person name="Potamousis K."/>
            <person name="Apodaca J."/>
            <person name="Anantharaman T.S."/>
            <person name="Lin J."/>
            <person name="Yen G."/>
            <person name="Schwartz D.C."/>
            <person name="Welch R.A."/>
            <person name="Blattner F.R."/>
        </authorList>
    </citation>
    <scope>NUCLEOTIDE SEQUENCE [LARGE SCALE GENOMIC DNA]</scope>
    <source>
        <strain>O157:H7 / EDL933 / ATCC 700927 / EHEC</strain>
    </source>
</reference>
<reference key="2">
    <citation type="journal article" date="2001" name="DNA Res.">
        <title>Complete genome sequence of enterohemorrhagic Escherichia coli O157:H7 and genomic comparison with a laboratory strain K-12.</title>
        <authorList>
            <person name="Hayashi T."/>
            <person name="Makino K."/>
            <person name="Ohnishi M."/>
            <person name="Kurokawa K."/>
            <person name="Ishii K."/>
            <person name="Yokoyama K."/>
            <person name="Han C.-G."/>
            <person name="Ohtsubo E."/>
            <person name="Nakayama K."/>
            <person name="Murata T."/>
            <person name="Tanaka M."/>
            <person name="Tobe T."/>
            <person name="Iida T."/>
            <person name="Takami H."/>
            <person name="Honda T."/>
            <person name="Sasakawa C."/>
            <person name="Ogasawara N."/>
            <person name="Yasunaga T."/>
            <person name="Kuhara S."/>
            <person name="Shiba T."/>
            <person name="Hattori M."/>
            <person name="Shinagawa H."/>
        </authorList>
    </citation>
    <scope>NUCLEOTIDE SEQUENCE [LARGE SCALE GENOMIC DNA]</scope>
    <source>
        <strain>O157:H7 / Sakai / RIMD 0509952 / EHEC</strain>
    </source>
</reference>
<name>OXYR_ECO57</name>
<keyword id="KW-0010">Activator</keyword>
<keyword id="KW-1015">Disulfide bond</keyword>
<keyword id="KW-0238">DNA-binding</keyword>
<keyword id="KW-0318">Glutathionylation</keyword>
<keyword id="KW-0558">Oxidation</keyword>
<keyword id="KW-1185">Reference proteome</keyword>
<keyword id="KW-0702">S-nitrosylation</keyword>
<keyword id="KW-0804">Transcription</keyword>
<keyword id="KW-0805">Transcription regulation</keyword>
<dbReference type="EMBL" id="AE005174">
    <property type="protein sequence ID" value="AAG59163.1"/>
    <property type="molecule type" value="Genomic_DNA"/>
</dbReference>
<dbReference type="EMBL" id="BA000007">
    <property type="protein sequence ID" value="BAB38313.1"/>
    <property type="molecule type" value="Genomic_DNA"/>
</dbReference>
<dbReference type="PIR" id="B91240">
    <property type="entry name" value="B91240"/>
</dbReference>
<dbReference type="PIR" id="G86087">
    <property type="entry name" value="G86087"/>
</dbReference>
<dbReference type="RefSeq" id="NP_312917.1">
    <property type="nucleotide sequence ID" value="NC_002695.1"/>
</dbReference>
<dbReference type="RefSeq" id="WP_001025939.1">
    <property type="nucleotide sequence ID" value="NZ_VOAI01000032.1"/>
</dbReference>
<dbReference type="SMR" id="P0ACQ6"/>
<dbReference type="STRING" id="155864.Z5519"/>
<dbReference type="GeneID" id="75203207"/>
<dbReference type="GeneID" id="914984"/>
<dbReference type="KEGG" id="ece:Z5519"/>
<dbReference type="KEGG" id="ecs:ECs_4890"/>
<dbReference type="PATRIC" id="fig|386585.9.peg.5114"/>
<dbReference type="eggNOG" id="COG0583">
    <property type="taxonomic scope" value="Bacteria"/>
</dbReference>
<dbReference type="HOGENOM" id="CLU_039613_6_4_6"/>
<dbReference type="OMA" id="YLMPRMI"/>
<dbReference type="Proteomes" id="UP000000558">
    <property type="component" value="Chromosome"/>
</dbReference>
<dbReference type="Proteomes" id="UP000002519">
    <property type="component" value="Chromosome"/>
</dbReference>
<dbReference type="GO" id="GO:0032993">
    <property type="term" value="C:protein-DNA complex"/>
    <property type="evidence" value="ECO:0007669"/>
    <property type="project" value="TreeGrafter"/>
</dbReference>
<dbReference type="GO" id="GO:0003677">
    <property type="term" value="F:DNA binding"/>
    <property type="evidence" value="ECO:0007669"/>
    <property type="project" value="UniProtKB-KW"/>
</dbReference>
<dbReference type="GO" id="GO:0003700">
    <property type="term" value="F:DNA-binding transcription factor activity"/>
    <property type="evidence" value="ECO:0007669"/>
    <property type="project" value="InterPro"/>
</dbReference>
<dbReference type="CDD" id="cd08411">
    <property type="entry name" value="PBP2_OxyR"/>
    <property type="match status" value="1"/>
</dbReference>
<dbReference type="FunFam" id="3.40.190.10:FF:000027">
    <property type="entry name" value="DNA-binding transcriptional regulator OxyR"/>
    <property type="match status" value="1"/>
</dbReference>
<dbReference type="FunFam" id="1.10.10.10:FF:000001">
    <property type="entry name" value="LysR family transcriptional regulator"/>
    <property type="match status" value="1"/>
</dbReference>
<dbReference type="Gene3D" id="3.40.190.10">
    <property type="entry name" value="Periplasmic binding protein-like II"/>
    <property type="match status" value="2"/>
</dbReference>
<dbReference type="Gene3D" id="1.10.10.10">
    <property type="entry name" value="Winged helix-like DNA-binding domain superfamily/Winged helix DNA-binding domain"/>
    <property type="match status" value="1"/>
</dbReference>
<dbReference type="InterPro" id="IPR005119">
    <property type="entry name" value="LysR_subst-bd"/>
</dbReference>
<dbReference type="InterPro" id="IPR000847">
    <property type="entry name" value="Tscrpt_reg_HTH_LysR"/>
</dbReference>
<dbReference type="InterPro" id="IPR036388">
    <property type="entry name" value="WH-like_DNA-bd_sf"/>
</dbReference>
<dbReference type="InterPro" id="IPR036390">
    <property type="entry name" value="WH_DNA-bd_sf"/>
</dbReference>
<dbReference type="NCBIfam" id="NF008361">
    <property type="entry name" value="PRK11151.1"/>
    <property type="match status" value="1"/>
</dbReference>
<dbReference type="PANTHER" id="PTHR30346:SF26">
    <property type="entry name" value="HYDROGEN PEROXIDE-INDUCIBLE GENES ACTIVATOR"/>
    <property type="match status" value="1"/>
</dbReference>
<dbReference type="PANTHER" id="PTHR30346">
    <property type="entry name" value="TRANSCRIPTIONAL DUAL REGULATOR HCAR-RELATED"/>
    <property type="match status" value="1"/>
</dbReference>
<dbReference type="Pfam" id="PF00126">
    <property type="entry name" value="HTH_1"/>
    <property type="match status" value="1"/>
</dbReference>
<dbReference type="Pfam" id="PF03466">
    <property type="entry name" value="LysR_substrate"/>
    <property type="match status" value="1"/>
</dbReference>
<dbReference type="PRINTS" id="PR00039">
    <property type="entry name" value="HTHLYSR"/>
</dbReference>
<dbReference type="SUPFAM" id="SSF53850">
    <property type="entry name" value="Periplasmic binding protein-like II"/>
    <property type="match status" value="1"/>
</dbReference>
<dbReference type="SUPFAM" id="SSF46785">
    <property type="entry name" value="Winged helix' DNA-binding domain"/>
    <property type="match status" value="1"/>
</dbReference>
<dbReference type="PROSITE" id="PS50931">
    <property type="entry name" value="HTH_LYSR"/>
    <property type="match status" value="1"/>
</dbReference>
<comment type="function">
    <text evidence="1">Hydrogen peroxide sensor. Activates the expression of a regulon of hydrogen peroxide-inducible genes such as katG, gor, ahpC, ahpF, oxyS (a regulatory RNA), dps, fur and grxA. OxyR expression is negatively autoregulated by binding to a 43 bp region upstream of its own coding sequence. OxyR is inactivated by reduction of its essential disulfide bond by the product of GrxA, itself positively regulated by OxyR. Also has a positive regulatory effect on the production of surface proteins that control the colony morphology and auto-aggregation ability (By similarity).</text>
</comment>
<comment type="activity regulation">
    <text evidence="1">Activated by oxidation of Cys-199 resulting in the alternative formation of cystine, sulfenic acid, S-nitroso- or glutathione-bound cysteine.</text>
</comment>
<comment type="subunit">
    <text evidence="1">Homodimer and homotetramer.</text>
</comment>
<comment type="PTM">
    <text evidence="1">Oxidized on Cys-199; the Cys-SOH formed in response to oxidative signaling triggers a conformational change and the onset of transcriptional activity with a specific DNA-binding affinity. Cys-199-SOH rapidly reacts with Cys-208-SH to form a disulfide bond (By similarity).</text>
</comment>
<comment type="PTM">
    <text evidence="1">S-nitrosylation in response to nitrosative signaling triggers a conformational change and the onset of transcriptional activity with a specific DNA-binding affinity.</text>
</comment>
<comment type="PTM">
    <text evidence="1">Glutathionylation in response to redox signaling triggers the onset of transcriptional activity with a specific DNA-binding affinity.</text>
</comment>
<comment type="miscellaneous">
    <text evidence="1">Oxidized OxyR can be reduced and inactivated by glutaredoxin 1, the product of grxA, whose expression is regulated by OxyR itself.</text>
</comment>
<comment type="similarity">
    <text evidence="3">Belongs to the LysR transcriptional regulatory family.</text>
</comment>
<proteinExistence type="inferred from homology"/>
<sequence length="305" mass="34276">MNIRDLEYLVALAEHRHFRRAADSCHVSQPTLSGQIRKLEDELGVMLLERTSRKVLFTQAGMLLVDQARTVLREVKVLKEMASQQGETMSGPLHIGLIPTVGPYLLPHIIPMLHQTFPKLEMYLHEAQTHQLLAQLDSGKLDCVILALVKESEAFIEVPLFDEPMLLAIYEDHPWANRECVPMADLAGEKLLMLEDGHCLRDQAMGFCFEAGADEDTHFRATSLETLRNMVAAGSGITLLPALAVPPERKRDGVVYLPCIKPEPRRTIGLVYRPGSPLRSRYEQLAEAIRARMDGHFDKVLKQAV</sequence>
<protein>
    <recommendedName>
        <fullName>Hydrogen peroxide-inducible genes activator</fullName>
    </recommendedName>
    <alternativeName>
        <fullName>Morphology and auto-aggregation control protein</fullName>
    </alternativeName>
</protein>